<accession>B9J7E0</accession>
<evidence type="ECO:0000255" key="1">
    <source>
        <dbReference type="HAMAP-Rule" id="MF_00818"/>
    </source>
</evidence>
<dbReference type="EC" id="1.7.1.13" evidence="1"/>
<dbReference type="EMBL" id="CP000628">
    <property type="protein sequence ID" value="ACM27247.1"/>
    <property type="molecule type" value="Genomic_DNA"/>
</dbReference>
<dbReference type="RefSeq" id="WP_012651975.1">
    <property type="nucleotide sequence ID" value="NC_011985.1"/>
</dbReference>
<dbReference type="SMR" id="B9J7E0"/>
<dbReference type="STRING" id="311403.Arad_3250"/>
<dbReference type="KEGG" id="ara:Arad_3250"/>
<dbReference type="eggNOG" id="COG0780">
    <property type="taxonomic scope" value="Bacteria"/>
</dbReference>
<dbReference type="HOGENOM" id="CLU_102489_0_1_5"/>
<dbReference type="UniPathway" id="UPA00392"/>
<dbReference type="Proteomes" id="UP000001600">
    <property type="component" value="Chromosome 1"/>
</dbReference>
<dbReference type="GO" id="GO:0005737">
    <property type="term" value="C:cytoplasm"/>
    <property type="evidence" value="ECO:0007669"/>
    <property type="project" value="UniProtKB-SubCell"/>
</dbReference>
<dbReference type="GO" id="GO:0033739">
    <property type="term" value="F:preQ1 synthase activity"/>
    <property type="evidence" value="ECO:0007669"/>
    <property type="project" value="UniProtKB-UniRule"/>
</dbReference>
<dbReference type="GO" id="GO:0008616">
    <property type="term" value="P:queuosine biosynthetic process"/>
    <property type="evidence" value="ECO:0007669"/>
    <property type="project" value="UniProtKB-UniRule"/>
</dbReference>
<dbReference type="GO" id="GO:0006400">
    <property type="term" value="P:tRNA modification"/>
    <property type="evidence" value="ECO:0007669"/>
    <property type="project" value="UniProtKB-UniRule"/>
</dbReference>
<dbReference type="Gene3D" id="3.30.1130.10">
    <property type="match status" value="1"/>
</dbReference>
<dbReference type="HAMAP" id="MF_00818">
    <property type="entry name" value="QueF_type1"/>
    <property type="match status" value="1"/>
</dbReference>
<dbReference type="InterPro" id="IPR043133">
    <property type="entry name" value="GTP-CH-I_C/QueF"/>
</dbReference>
<dbReference type="InterPro" id="IPR050084">
    <property type="entry name" value="NADPH_dep_7-cyano-7-deazaG_red"/>
</dbReference>
<dbReference type="InterPro" id="IPR029500">
    <property type="entry name" value="QueF"/>
</dbReference>
<dbReference type="InterPro" id="IPR016856">
    <property type="entry name" value="QueF_type1"/>
</dbReference>
<dbReference type="NCBIfam" id="TIGR03139">
    <property type="entry name" value="QueF-II"/>
    <property type="match status" value="1"/>
</dbReference>
<dbReference type="PANTHER" id="PTHR34354">
    <property type="entry name" value="NADPH-DEPENDENT 7-CYANO-7-DEAZAGUANINE REDUCTASE"/>
    <property type="match status" value="1"/>
</dbReference>
<dbReference type="PANTHER" id="PTHR34354:SF1">
    <property type="entry name" value="NADPH-DEPENDENT 7-CYANO-7-DEAZAGUANINE REDUCTASE"/>
    <property type="match status" value="1"/>
</dbReference>
<dbReference type="Pfam" id="PF14489">
    <property type="entry name" value="QueF"/>
    <property type="match status" value="1"/>
</dbReference>
<dbReference type="PIRSF" id="PIRSF027377">
    <property type="entry name" value="Nitrile_oxidored_QueF"/>
    <property type="match status" value="1"/>
</dbReference>
<dbReference type="SUPFAM" id="SSF55620">
    <property type="entry name" value="Tetrahydrobiopterin biosynthesis enzymes-like"/>
    <property type="match status" value="1"/>
</dbReference>
<keyword id="KW-0963">Cytoplasm</keyword>
<keyword id="KW-0521">NADP</keyword>
<keyword id="KW-0560">Oxidoreductase</keyword>
<keyword id="KW-0671">Queuosine biosynthesis</keyword>
<protein>
    <recommendedName>
        <fullName evidence="1">NADPH-dependent 7-cyano-7-deazaguanine reductase</fullName>
        <ecNumber evidence="1">1.7.1.13</ecNumber>
    </recommendedName>
    <alternativeName>
        <fullName evidence="1">7-cyano-7-carbaguanine reductase</fullName>
    </alternativeName>
    <alternativeName>
        <fullName evidence="1">NADPH-dependent nitrile oxidoreductase</fullName>
    </alternativeName>
    <alternativeName>
        <fullName evidence="1">PreQ(0) reductase</fullName>
    </alternativeName>
</protein>
<reference key="1">
    <citation type="journal article" date="2009" name="J. Bacteriol.">
        <title>Genome sequences of three Agrobacterium biovars help elucidate the evolution of multichromosome genomes in bacteria.</title>
        <authorList>
            <person name="Slater S.C."/>
            <person name="Goldman B.S."/>
            <person name="Goodner B."/>
            <person name="Setubal J.C."/>
            <person name="Farrand S.K."/>
            <person name="Nester E.W."/>
            <person name="Burr T.J."/>
            <person name="Banta L."/>
            <person name="Dickerman A.W."/>
            <person name="Paulsen I."/>
            <person name="Otten L."/>
            <person name="Suen G."/>
            <person name="Welch R."/>
            <person name="Almeida N.F."/>
            <person name="Arnold F."/>
            <person name="Burton O.T."/>
            <person name="Du Z."/>
            <person name="Ewing A."/>
            <person name="Godsy E."/>
            <person name="Heisel S."/>
            <person name="Houmiel K.L."/>
            <person name="Jhaveri J."/>
            <person name="Lu J."/>
            <person name="Miller N.M."/>
            <person name="Norton S."/>
            <person name="Chen Q."/>
            <person name="Phoolcharoen W."/>
            <person name="Ohlin V."/>
            <person name="Ondrusek D."/>
            <person name="Pride N."/>
            <person name="Stricklin S.L."/>
            <person name="Sun J."/>
            <person name="Wheeler C."/>
            <person name="Wilson L."/>
            <person name="Zhu H."/>
            <person name="Wood D.W."/>
        </authorList>
    </citation>
    <scope>NUCLEOTIDE SEQUENCE [LARGE SCALE GENOMIC DNA]</scope>
    <source>
        <strain>K84 / ATCC BAA-868</strain>
    </source>
</reference>
<proteinExistence type="inferred from homology"/>
<sequence length="154" mass="17294">MPKTDVSGLSMLGNQTETAANPEVAVLEKVPAGYAGTDYVVRFTAPEFTSLCPMTGQPDFAHIVIDYVPNEWLVESKSLKLFLHSFRNHGAFHEDCSIYIAKRLVELLEPKWLRIGAYWYPRGGIPIDVFWQTGKPPEGVWLPDQGVQPYRGRG</sequence>
<feature type="chain" id="PRO_1000148659" description="NADPH-dependent 7-cyano-7-deazaguanine reductase">
    <location>
        <begin position="1"/>
        <end position="154"/>
    </location>
</feature>
<feature type="active site" description="Thioimide intermediate" evidence="1">
    <location>
        <position position="52"/>
    </location>
</feature>
<feature type="active site" description="Proton donor" evidence="1">
    <location>
        <position position="59"/>
    </location>
</feature>
<feature type="binding site" evidence="1">
    <location>
        <begin position="74"/>
        <end position="76"/>
    </location>
    <ligand>
        <name>substrate</name>
    </ligand>
</feature>
<feature type="binding site" evidence="1">
    <location>
        <begin position="93"/>
        <end position="94"/>
    </location>
    <ligand>
        <name>substrate</name>
    </ligand>
</feature>
<organism>
    <name type="scientific">Rhizobium rhizogenes (strain K84 / ATCC BAA-868)</name>
    <name type="common">Agrobacterium radiobacter</name>
    <dbReference type="NCBI Taxonomy" id="311403"/>
    <lineage>
        <taxon>Bacteria</taxon>
        <taxon>Pseudomonadati</taxon>
        <taxon>Pseudomonadota</taxon>
        <taxon>Alphaproteobacteria</taxon>
        <taxon>Hyphomicrobiales</taxon>
        <taxon>Rhizobiaceae</taxon>
        <taxon>Rhizobium/Agrobacterium group</taxon>
        <taxon>Rhizobium</taxon>
    </lineage>
</organism>
<comment type="function">
    <text evidence="1">Catalyzes the NADPH-dependent reduction of 7-cyano-7-deazaguanine (preQ0) to 7-aminomethyl-7-deazaguanine (preQ1).</text>
</comment>
<comment type="catalytic activity">
    <reaction evidence="1">
        <text>7-aminomethyl-7-carbaguanine + 2 NADP(+) = 7-cyano-7-deazaguanine + 2 NADPH + 3 H(+)</text>
        <dbReference type="Rhea" id="RHEA:13409"/>
        <dbReference type="ChEBI" id="CHEBI:15378"/>
        <dbReference type="ChEBI" id="CHEBI:45075"/>
        <dbReference type="ChEBI" id="CHEBI:57783"/>
        <dbReference type="ChEBI" id="CHEBI:58349"/>
        <dbReference type="ChEBI" id="CHEBI:58703"/>
        <dbReference type="EC" id="1.7.1.13"/>
    </reaction>
</comment>
<comment type="pathway">
    <text evidence="1">tRNA modification; tRNA-queuosine biosynthesis.</text>
</comment>
<comment type="subcellular location">
    <subcellularLocation>
        <location evidence="1">Cytoplasm</location>
    </subcellularLocation>
</comment>
<comment type="similarity">
    <text evidence="1">Belongs to the GTP cyclohydrolase I family. QueF type 1 subfamily.</text>
</comment>
<name>QUEF_RHIR8</name>
<gene>
    <name evidence="1" type="primary">queF</name>
    <name type="ordered locus">Arad_3250</name>
</gene>